<protein>
    <recommendedName>
        <fullName evidence="1">Crossover junction endodeoxyribonuclease RuvC</fullName>
        <ecNumber evidence="1">3.1.21.10</ecNumber>
    </recommendedName>
    <alternativeName>
        <fullName evidence="1">Holliday junction nuclease RuvC</fullName>
    </alternativeName>
    <alternativeName>
        <fullName evidence="1">Holliday junction resolvase RuvC</fullName>
    </alternativeName>
</protein>
<keyword id="KW-0963">Cytoplasm</keyword>
<keyword id="KW-0227">DNA damage</keyword>
<keyword id="KW-0233">DNA recombination</keyword>
<keyword id="KW-0234">DNA repair</keyword>
<keyword id="KW-0238">DNA-binding</keyword>
<keyword id="KW-0255">Endonuclease</keyword>
<keyword id="KW-0378">Hydrolase</keyword>
<keyword id="KW-0460">Magnesium</keyword>
<keyword id="KW-0479">Metal-binding</keyword>
<keyword id="KW-0540">Nuclease</keyword>
<dbReference type="EC" id="3.1.21.10" evidence="1"/>
<dbReference type="EMBL" id="AE017220">
    <property type="protein sequence ID" value="AAX65812.1"/>
    <property type="molecule type" value="Genomic_DNA"/>
</dbReference>
<dbReference type="RefSeq" id="WP_011264315.1">
    <property type="nucleotide sequence ID" value="NC_006905.1"/>
</dbReference>
<dbReference type="SMR" id="Q57N99"/>
<dbReference type="KEGG" id="sec:SCH_1906"/>
<dbReference type="HOGENOM" id="CLU_091257_2_1_6"/>
<dbReference type="Proteomes" id="UP000000538">
    <property type="component" value="Chromosome"/>
</dbReference>
<dbReference type="GO" id="GO:0005737">
    <property type="term" value="C:cytoplasm"/>
    <property type="evidence" value="ECO:0007669"/>
    <property type="project" value="UniProtKB-SubCell"/>
</dbReference>
<dbReference type="GO" id="GO:0048476">
    <property type="term" value="C:Holliday junction resolvase complex"/>
    <property type="evidence" value="ECO:0007669"/>
    <property type="project" value="UniProtKB-UniRule"/>
</dbReference>
<dbReference type="GO" id="GO:0008821">
    <property type="term" value="F:crossover junction DNA endonuclease activity"/>
    <property type="evidence" value="ECO:0007669"/>
    <property type="project" value="UniProtKB-UniRule"/>
</dbReference>
<dbReference type="GO" id="GO:0003677">
    <property type="term" value="F:DNA binding"/>
    <property type="evidence" value="ECO:0007669"/>
    <property type="project" value="UniProtKB-KW"/>
</dbReference>
<dbReference type="GO" id="GO:0000287">
    <property type="term" value="F:magnesium ion binding"/>
    <property type="evidence" value="ECO:0007669"/>
    <property type="project" value="UniProtKB-UniRule"/>
</dbReference>
<dbReference type="GO" id="GO:0006310">
    <property type="term" value="P:DNA recombination"/>
    <property type="evidence" value="ECO:0007669"/>
    <property type="project" value="UniProtKB-UniRule"/>
</dbReference>
<dbReference type="GO" id="GO:0006281">
    <property type="term" value="P:DNA repair"/>
    <property type="evidence" value="ECO:0007669"/>
    <property type="project" value="UniProtKB-UniRule"/>
</dbReference>
<dbReference type="CDD" id="cd16962">
    <property type="entry name" value="RuvC"/>
    <property type="match status" value="1"/>
</dbReference>
<dbReference type="FunFam" id="3.30.420.10:FF:000002">
    <property type="entry name" value="Crossover junction endodeoxyribonuclease RuvC"/>
    <property type="match status" value="1"/>
</dbReference>
<dbReference type="Gene3D" id="3.30.420.10">
    <property type="entry name" value="Ribonuclease H-like superfamily/Ribonuclease H"/>
    <property type="match status" value="1"/>
</dbReference>
<dbReference type="HAMAP" id="MF_00034">
    <property type="entry name" value="RuvC"/>
    <property type="match status" value="1"/>
</dbReference>
<dbReference type="InterPro" id="IPR012337">
    <property type="entry name" value="RNaseH-like_sf"/>
</dbReference>
<dbReference type="InterPro" id="IPR036397">
    <property type="entry name" value="RNaseH_sf"/>
</dbReference>
<dbReference type="InterPro" id="IPR020563">
    <property type="entry name" value="X-over_junc_endoDNase_Mg_BS"/>
</dbReference>
<dbReference type="InterPro" id="IPR002176">
    <property type="entry name" value="X-over_junc_endoDNase_RuvC"/>
</dbReference>
<dbReference type="NCBIfam" id="NF000711">
    <property type="entry name" value="PRK00039.2-1"/>
    <property type="match status" value="1"/>
</dbReference>
<dbReference type="NCBIfam" id="TIGR00228">
    <property type="entry name" value="ruvC"/>
    <property type="match status" value="1"/>
</dbReference>
<dbReference type="PANTHER" id="PTHR30194">
    <property type="entry name" value="CROSSOVER JUNCTION ENDODEOXYRIBONUCLEASE RUVC"/>
    <property type="match status" value="1"/>
</dbReference>
<dbReference type="PANTHER" id="PTHR30194:SF3">
    <property type="entry name" value="CROSSOVER JUNCTION ENDODEOXYRIBONUCLEASE RUVC"/>
    <property type="match status" value="1"/>
</dbReference>
<dbReference type="Pfam" id="PF02075">
    <property type="entry name" value="RuvC"/>
    <property type="match status" value="1"/>
</dbReference>
<dbReference type="PRINTS" id="PR00696">
    <property type="entry name" value="RSOLVASERUVC"/>
</dbReference>
<dbReference type="SUPFAM" id="SSF53098">
    <property type="entry name" value="Ribonuclease H-like"/>
    <property type="match status" value="1"/>
</dbReference>
<dbReference type="PROSITE" id="PS01321">
    <property type="entry name" value="RUVC"/>
    <property type="match status" value="1"/>
</dbReference>
<accession>Q57N99</accession>
<evidence type="ECO:0000255" key="1">
    <source>
        <dbReference type="HAMAP-Rule" id="MF_00034"/>
    </source>
</evidence>
<proteinExistence type="inferred from homology"/>
<feature type="chain" id="PRO_0000225174" description="Crossover junction endodeoxyribonuclease RuvC">
    <location>
        <begin position="1"/>
        <end position="173"/>
    </location>
</feature>
<feature type="active site" evidence="1">
    <location>
        <position position="8"/>
    </location>
</feature>
<feature type="active site" evidence="1">
    <location>
        <position position="67"/>
    </location>
</feature>
<feature type="active site" evidence="1">
    <location>
        <position position="139"/>
    </location>
</feature>
<feature type="binding site" evidence="1">
    <location>
        <position position="8"/>
    </location>
    <ligand>
        <name>Mg(2+)</name>
        <dbReference type="ChEBI" id="CHEBI:18420"/>
        <label>1</label>
    </ligand>
</feature>
<feature type="binding site" evidence="1">
    <location>
        <position position="67"/>
    </location>
    <ligand>
        <name>Mg(2+)</name>
        <dbReference type="ChEBI" id="CHEBI:18420"/>
        <label>2</label>
    </ligand>
</feature>
<feature type="binding site" evidence="1">
    <location>
        <position position="139"/>
    </location>
    <ligand>
        <name>Mg(2+)</name>
        <dbReference type="ChEBI" id="CHEBI:18420"/>
        <label>1</label>
    </ligand>
</feature>
<name>RUVC_SALCH</name>
<sequence>MSIILGIDPGSRITGYGVIRQVGRQLTYLGSGCIRTKVDDLPSRLKLIYAGVTEIITQFQPDYFAIEQVFMAKNADSALKLGQVRGVAIVAAVNQELPVFEYAARQVKQTVVGIGSAEKSQVQHMVRTLLKLPANPQADAADALAIAITHCHVSQNVMQMSESRLNLARGRLR</sequence>
<comment type="function">
    <text evidence="1">The RuvA-RuvB-RuvC complex processes Holliday junction (HJ) DNA during genetic recombination and DNA repair. Endonuclease that resolves HJ intermediates. Cleaves cruciform DNA by making single-stranded nicks across the HJ at symmetrical positions within the homologous arms, yielding a 5'-phosphate and a 3'-hydroxyl group; requires a central core of homology in the junction. The consensus cleavage sequence is 5'-(A/T)TT(C/G)-3'. Cleavage occurs on the 3'-side of the TT dinucleotide at the point of strand exchange. HJ branch migration catalyzed by RuvA-RuvB allows RuvC to scan DNA until it finds its consensus sequence, where it cleaves and resolves the cruciform DNA.</text>
</comment>
<comment type="catalytic activity">
    <reaction evidence="1">
        <text>Endonucleolytic cleavage at a junction such as a reciprocal single-stranded crossover between two homologous DNA duplexes (Holliday junction).</text>
        <dbReference type="EC" id="3.1.21.10"/>
    </reaction>
</comment>
<comment type="cofactor">
    <cofactor evidence="1">
        <name>Mg(2+)</name>
        <dbReference type="ChEBI" id="CHEBI:18420"/>
    </cofactor>
    <text evidence="1">Binds 2 Mg(2+) ion per subunit.</text>
</comment>
<comment type="subunit">
    <text evidence="1">Homodimer which binds Holliday junction (HJ) DNA. The HJ becomes 2-fold symmetrical on binding to RuvC with unstacked arms; it has a different conformation from HJ DNA in complex with RuvA. In the full resolvosome a probable DNA-RuvA(4)-RuvB(12)-RuvC(2) complex forms which resolves the HJ.</text>
</comment>
<comment type="subcellular location">
    <subcellularLocation>
        <location evidence="1">Cytoplasm</location>
    </subcellularLocation>
</comment>
<comment type="similarity">
    <text evidence="1">Belongs to the RuvC family.</text>
</comment>
<reference key="1">
    <citation type="journal article" date="2005" name="Nucleic Acids Res.">
        <title>The genome sequence of Salmonella enterica serovar Choleraesuis, a highly invasive and resistant zoonotic pathogen.</title>
        <authorList>
            <person name="Chiu C.-H."/>
            <person name="Tang P."/>
            <person name="Chu C."/>
            <person name="Hu S."/>
            <person name="Bao Q."/>
            <person name="Yu J."/>
            <person name="Chou Y.-Y."/>
            <person name="Wang H.-S."/>
            <person name="Lee Y.-S."/>
        </authorList>
    </citation>
    <scope>NUCLEOTIDE SEQUENCE [LARGE SCALE GENOMIC DNA]</scope>
    <source>
        <strain>SC-B67</strain>
    </source>
</reference>
<gene>
    <name evidence="1" type="primary">ruvC</name>
    <name type="ordered locus">SCH_1906</name>
</gene>
<organism>
    <name type="scientific">Salmonella choleraesuis (strain SC-B67)</name>
    <dbReference type="NCBI Taxonomy" id="321314"/>
    <lineage>
        <taxon>Bacteria</taxon>
        <taxon>Pseudomonadati</taxon>
        <taxon>Pseudomonadota</taxon>
        <taxon>Gammaproteobacteria</taxon>
        <taxon>Enterobacterales</taxon>
        <taxon>Enterobacteriaceae</taxon>
        <taxon>Salmonella</taxon>
    </lineage>
</organism>